<keyword id="KW-1003">Cell membrane</keyword>
<keyword id="KW-0418">Kinase</keyword>
<keyword id="KW-0472">Membrane</keyword>
<keyword id="KW-0597">Phosphoprotein</keyword>
<keyword id="KW-0598">Phosphotransferase system</keyword>
<keyword id="KW-1185">Reference proteome</keyword>
<keyword id="KW-0762">Sugar transport</keyword>
<keyword id="KW-0808">Transferase</keyword>
<keyword id="KW-0812">Transmembrane</keyword>
<keyword id="KW-1133">Transmembrane helix</keyword>
<keyword id="KW-0813">Transport</keyword>
<reference key="1">
    <citation type="journal article" date="2001" name="Science">
        <title>Complete genome sequence of a virulent isolate of Streptococcus pneumoniae.</title>
        <authorList>
            <person name="Tettelin H."/>
            <person name="Nelson K.E."/>
            <person name="Paulsen I.T."/>
            <person name="Eisen J.A."/>
            <person name="Read T.D."/>
            <person name="Peterson S.N."/>
            <person name="Heidelberg J.F."/>
            <person name="DeBoy R.T."/>
            <person name="Haft D.H."/>
            <person name="Dodson R.J."/>
            <person name="Durkin A.S."/>
            <person name="Gwinn M.L."/>
            <person name="Kolonay J.F."/>
            <person name="Nelson W.C."/>
            <person name="Peterson J.D."/>
            <person name="Umayam L.A."/>
            <person name="White O."/>
            <person name="Salzberg S.L."/>
            <person name="Lewis M.R."/>
            <person name="Radune D."/>
            <person name="Holtzapple E.K."/>
            <person name="Khouri H.M."/>
            <person name="Wolf A.M."/>
            <person name="Utterback T.R."/>
            <person name="Hansen C.L."/>
            <person name="McDonald L.A."/>
            <person name="Feldblyum T.V."/>
            <person name="Angiuoli S.V."/>
            <person name="Dickinson T."/>
            <person name="Hickey E.K."/>
            <person name="Holt I.E."/>
            <person name="Loftus B.J."/>
            <person name="Yang F."/>
            <person name="Smith H.O."/>
            <person name="Venter J.C."/>
            <person name="Dougherty B.A."/>
            <person name="Morrison D.A."/>
            <person name="Hollingshead S.K."/>
            <person name="Fraser C.M."/>
        </authorList>
    </citation>
    <scope>NUCLEOTIDE SEQUENCE [LARGE SCALE GENOMIC DNA]</scope>
    <source>
        <strain>ATCC BAA-334 / TIGR4</strain>
    </source>
</reference>
<feature type="chain" id="PRO_0000186630" description="PTS system mannitol-specific EIICB component">
    <location>
        <begin position="1"/>
        <end position="589"/>
    </location>
</feature>
<feature type="topological domain" description="Cytoplasmic" evidence="1">
    <location>
        <begin position="1"/>
        <end position="25"/>
    </location>
</feature>
<feature type="transmembrane region" description="Helical" evidence="1">
    <location>
        <begin position="26"/>
        <end position="47"/>
    </location>
</feature>
<feature type="topological domain" description="Extracellular" evidence="1">
    <location>
        <begin position="48"/>
        <end position="51"/>
    </location>
</feature>
<feature type="transmembrane region" description="Helical" evidence="1">
    <location>
        <begin position="52"/>
        <end position="72"/>
    </location>
</feature>
<feature type="topological domain" description="Cytoplasmic" evidence="1">
    <location>
        <begin position="73"/>
        <end position="135"/>
    </location>
</feature>
<feature type="transmembrane region" description="Helical" evidence="1">
    <location>
        <begin position="136"/>
        <end position="157"/>
    </location>
</feature>
<feature type="topological domain" description="Extracellular" evidence="1">
    <location>
        <begin position="158"/>
        <end position="166"/>
    </location>
</feature>
<feature type="transmembrane region" description="Helical" evidence="1">
    <location>
        <begin position="167"/>
        <end position="187"/>
    </location>
</feature>
<feature type="topological domain" description="Cytoplasmic" evidence="1">
    <location>
        <begin position="188"/>
        <end position="274"/>
    </location>
</feature>
<feature type="transmembrane region" description="Helical" evidence="1">
    <location>
        <begin position="275"/>
        <end position="294"/>
    </location>
</feature>
<feature type="topological domain" description="Extracellular" evidence="1">
    <location>
        <begin position="295"/>
        <end position="316"/>
    </location>
</feature>
<feature type="transmembrane region" description="Helical" evidence="1">
    <location>
        <begin position="317"/>
        <end position="338"/>
    </location>
</feature>
<feature type="topological domain" description="Cytoplasmic" evidence="1">
    <location>
        <begin position="339"/>
        <end position="589"/>
    </location>
</feature>
<feature type="domain" description="PTS EIIC type-2" evidence="4">
    <location>
        <begin position="14"/>
        <end position="347"/>
    </location>
</feature>
<feature type="domain" description="PTS EIIB type-2" evidence="3">
    <location>
        <begin position="381"/>
        <end position="476"/>
    </location>
</feature>
<feature type="active site" description="Phosphocysteine intermediate; for EIIB activity" evidence="1 2">
    <location>
        <position position="387"/>
    </location>
</feature>
<feature type="modified residue" description="Phosphocysteine; by EIIA" evidence="1 2 3">
    <location>
        <position position="387"/>
    </location>
</feature>
<dbReference type="EC" id="2.7.1.197" evidence="1 2"/>
<dbReference type="EMBL" id="AE005672">
    <property type="protein sequence ID" value="AAK74558.1"/>
    <property type="molecule type" value="Genomic_DNA"/>
</dbReference>
<dbReference type="PIR" id="E95045">
    <property type="entry name" value="E95045"/>
</dbReference>
<dbReference type="RefSeq" id="WP_000391672.1">
    <property type="nucleotide sequence ID" value="NC_003028.3"/>
</dbReference>
<dbReference type="SMR" id="Q97SH4"/>
<dbReference type="PaxDb" id="170187-SP_0394"/>
<dbReference type="EnsemblBacteria" id="AAK74558">
    <property type="protein sequence ID" value="AAK74558"/>
    <property type="gene ID" value="SP_0394"/>
</dbReference>
<dbReference type="KEGG" id="spn:SP_0394"/>
<dbReference type="eggNOG" id="COG2213">
    <property type="taxonomic scope" value="Bacteria"/>
</dbReference>
<dbReference type="PhylomeDB" id="Q97SH4"/>
<dbReference type="BioCyc" id="SPNE170187:G1FZB-410-MONOMER"/>
<dbReference type="Proteomes" id="UP000000585">
    <property type="component" value="Chromosome"/>
</dbReference>
<dbReference type="GO" id="GO:0005886">
    <property type="term" value="C:plasma membrane"/>
    <property type="evidence" value="ECO:0007669"/>
    <property type="project" value="UniProtKB-SubCell"/>
</dbReference>
<dbReference type="GO" id="GO:0016301">
    <property type="term" value="F:kinase activity"/>
    <property type="evidence" value="ECO:0007669"/>
    <property type="project" value="UniProtKB-KW"/>
</dbReference>
<dbReference type="GO" id="GO:0022872">
    <property type="term" value="F:protein-N(PI)-phosphohistidine-mannitol phosphotransferase system transmembrane transporter activity"/>
    <property type="evidence" value="ECO:0007669"/>
    <property type="project" value="InterPro"/>
</dbReference>
<dbReference type="GO" id="GO:0090563">
    <property type="term" value="F:protein-phosphocysteine-sugar phosphotransferase activity"/>
    <property type="evidence" value="ECO:0007669"/>
    <property type="project" value="TreeGrafter"/>
</dbReference>
<dbReference type="GO" id="GO:0009401">
    <property type="term" value="P:phosphoenolpyruvate-dependent sugar phosphotransferase system"/>
    <property type="evidence" value="ECO:0007669"/>
    <property type="project" value="UniProtKB-KW"/>
</dbReference>
<dbReference type="CDD" id="cd05567">
    <property type="entry name" value="PTS_IIB_mannitol"/>
    <property type="match status" value="2"/>
</dbReference>
<dbReference type="FunFam" id="3.40.50.2300:FF:000493">
    <property type="entry name" value="PTS system mannitol-specific transporter subunit EIIBC"/>
    <property type="match status" value="1"/>
</dbReference>
<dbReference type="Gene3D" id="3.40.50.2300">
    <property type="match status" value="2"/>
</dbReference>
<dbReference type="InterPro" id="IPR036095">
    <property type="entry name" value="PTS_EIIB-like_sf"/>
</dbReference>
<dbReference type="InterPro" id="IPR013011">
    <property type="entry name" value="PTS_EIIB_2"/>
</dbReference>
<dbReference type="InterPro" id="IPR003501">
    <property type="entry name" value="PTS_EIIB_2/3"/>
</dbReference>
<dbReference type="InterPro" id="IPR029503">
    <property type="entry name" value="PTS_EIIB_mannitol"/>
</dbReference>
<dbReference type="InterPro" id="IPR003352">
    <property type="entry name" value="PTS_EIIC"/>
</dbReference>
<dbReference type="InterPro" id="IPR013014">
    <property type="entry name" value="PTS_EIIC_2"/>
</dbReference>
<dbReference type="InterPro" id="IPR004718">
    <property type="entry name" value="PTS_IIC_mtl"/>
</dbReference>
<dbReference type="InterPro" id="IPR050893">
    <property type="entry name" value="Sugar_PTS"/>
</dbReference>
<dbReference type="NCBIfam" id="TIGR00851">
    <property type="entry name" value="mtlA"/>
    <property type="match status" value="1"/>
</dbReference>
<dbReference type="NCBIfam" id="NF011663">
    <property type="entry name" value="PRK15083.1"/>
    <property type="match status" value="1"/>
</dbReference>
<dbReference type="PANTHER" id="PTHR30181">
    <property type="entry name" value="MANNITOL PERMEASE IIC COMPONENT"/>
    <property type="match status" value="1"/>
</dbReference>
<dbReference type="PANTHER" id="PTHR30181:SF2">
    <property type="entry name" value="PTS SYSTEM MANNITOL-SPECIFIC EIICBA COMPONENT"/>
    <property type="match status" value="1"/>
</dbReference>
<dbReference type="Pfam" id="PF02378">
    <property type="entry name" value="PTS_EIIC"/>
    <property type="match status" value="1"/>
</dbReference>
<dbReference type="Pfam" id="PF02302">
    <property type="entry name" value="PTS_IIB"/>
    <property type="match status" value="1"/>
</dbReference>
<dbReference type="SUPFAM" id="SSF52794">
    <property type="entry name" value="PTS system IIB component-like"/>
    <property type="match status" value="2"/>
</dbReference>
<dbReference type="PROSITE" id="PS51099">
    <property type="entry name" value="PTS_EIIB_TYPE_2"/>
    <property type="match status" value="1"/>
</dbReference>
<dbReference type="PROSITE" id="PS51104">
    <property type="entry name" value="PTS_EIIC_TYPE_2"/>
    <property type="match status" value="1"/>
</dbReference>
<organism>
    <name type="scientific">Streptococcus pneumoniae serotype 4 (strain ATCC BAA-334 / TIGR4)</name>
    <dbReference type="NCBI Taxonomy" id="170187"/>
    <lineage>
        <taxon>Bacteria</taxon>
        <taxon>Bacillati</taxon>
        <taxon>Bacillota</taxon>
        <taxon>Bacilli</taxon>
        <taxon>Lactobacillales</taxon>
        <taxon>Streptococcaceae</taxon>
        <taxon>Streptococcus</taxon>
    </lineage>
</organism>
<comment type="function">
    <text evidence="2">The phosphoenolpyruvate-dependent sugar phosphotransferase system (sugar PTS), a major carbohydrate active transport system, catalyzes the phosphorylation of incoming sugar substrates concomitantly with their translocation across the cell membrane. The enzyme II CmtAB PTS system is involved in D-mannitol transport.</text>
</comment>
<comment type="catalytic activity">
    <reaction evidence="1 2">
        <text>D-mannitol(out) + N(pros)-phospho-L-histidyl-[protein] = D-mannitol 1-phosphate(in) + L-histidyl-[protein]</text>
        <dbReference type="Rhea" id="RHEA:33363"/>
        <dbReference type="Rhea" id="RHEA-COMP:9745"/>
        <dbReference type="Rhea" id="RHEA-COMP:9746"/>
        <dbReference type="ChEBI" id="CHEBI:16899"/>
        <dbReference type="ChEBI" id="CHEBI:29979"/>
        <dbReference type="ChEBI" id="CHEBI:61381"/>
        <dbReference type="ChEBI" id="CHEBI:64837"/>
        <dbReference type="EC" id="2.7.1.197"/>
    </reaction>
</comment>
<comment type="subunit">
    <text evidence="2">Homodimer.</text>
</comment>
<comment type="subcellular location">
    <subcellularLocation>
        <location evidence="4">Cell membrane</location>
        <topology evidence="4">Multi-pass membrane protein</topology>
    </subcellularLocation>
</comment>
<comment type="domain">
    <text evidence="4">The EIIC type-2 domain forms the PTS system translocation channel and contains the specific substrate-binding site.</text>
</comment>
<comment type="domain">
    <text evidence="3">The PTS EIIB type-2 domain is phosphorylated by phospho-EIIA on a cysteinyl residue. Then, it transfers the phosphoryl group to the sugar substrate concomitantly with the sugar uptake processed by the PTS EIIC type-2 domain.</text>
</comment>
<protein>
    <recommendedName>
        <fullName evidence="2">PTS system mannitol-specific EIICB component</fullName>
    </recommendedName>
    <alternativeName>
        <fullName evidence="2">EIICB-Mtl</fullName>
        <shortName evidence="2">EII-Mtl</shortName>
    </alternativeName>
    <domain>
        <recommendedName>
            <fullName evidence="2">Mannitol permease IIC component</fullName>
        </recommendedName>
        <alternativeName>
            <fullName evidence="2">PTS system mannitol-specific EIIC component</fullName>
        </alternativeName>
    </domain>
    <domain>
        <recommendedName>
            <fullName evidence="2">Mannitol-specific phosphotransferase enzyme IIB component</fullName>
            <ecNumber evidence="1 2">2.7.1.197</ecNumber>
        </recommendedName>
        <alternativeName>
            <fullName evidence="2">PTS system mannitol-specific EIIB component</fullName>
        </alternativeName>
    </domain>
</protein>
<evidence type="ECO:0000250" key="1">
    <source>
        <dbReference type="UniProtKB" id="P00550"/>
    </source>
</evidence>
<evidence type="ECO:0000250" key="2">
    <source>
        <dbReference type="UniProtKB" id="P28008"/>
    </source>
</evidence>
<evidence type="ECO:0000255" key="3">
    <source>
        <dbReference type="PROSITE-ProRule" id="PRU00422"/>
    </source>
</evidence>
<evidence type="ECO:0000255" key="4">
    <source>
        <dbReference type="PROSITE-ProRule" id="PRU00427"/>
    </source>
</evidence>
<sequence>MEEKVSLKVRVQKLGTSLSNMVMPNIGAFIAWGVLTALFIADGYLPNEQLATVVGPMLTYLLPILIGYTGGYMIHGQRGAVVGAIATVGAITGSSVPMFIGAMVMGPLGGWTIKKFDEKFQEKIRPGFEMLVNNFSAGLVGFALLLLAFYAIGPVVSTLTGAVGNGVEAIVNARLLPMANIIIEPAKVLFLNNALNHGIFTPLGVEQVAQAGKSILFLLEANPGPGLGILLAYAVFGKGSAKSSSWGAMVIHFFGGIHEIYFPYVMMKPTLFLAAMAGGISGTFTFQLLDAGLKSPASPGSIIAIIATAPKGVWPHLNVLLGVLVAAVVSFLVAALILHADKSTEDSLEAAQAATQAAKAQSKGQLVSTSVDAVVSTDSVEKIIFACDAGMGSSAMGASILRDKVKKAGLEIPVSNQAISNLLDTPKTLIVTQEELTPRAKDKSPSAIHVSVDNFLASSRYDEIVASLTGASPIAEIEGDIPTSAPVDSQESDLNHIDAVVVAYGKAQGTATMGCETIRAIFRNKNIRIPVSTAKISELGEFNSKNIMIVTTISLQAEVQQAAPNSQFLIVDSLVTTPEYDKMAARMYK</sequence>
<gene>
    <name type="primary">mtlA</name>
    <name type="ordered locus">SP_0394</name>
</gene>
<proteinExistence type="inferred from homology"/>
<accession>Q97SH4</accession>
<name>PTMCB_STRPN</name>